<reference key="1">
    <citation type="journal article" date="1996" name="Chin. Sci. Bull.">
        <title>Cloning and sequencing of two depressant insect selective neurotoxin cDNAs from Buthus martensii Karsch.</title>
        <authorList>
            <person name="Zhu X."/>
            <person name="Zhang T."/>
            <person name="Zhu Y."/>
        </authorList>
    </citation>
    <scope>NUCLEOTIDE SEQUENCE [MRNA]</scope>
    <source>
        <tissue>Venom gland</tissue>
    </source>
</reference>
<reference key="2">
    <citation type="journal article" date="2001" name="Toxicon">
        <title>Prokaryotically expressed Buthus martensii Karsch insect depressant toxin has insecticidal effects.</title>
        <authorList>
            <person name="Jiang G."/>
            <person name="Xu Y."/>
            <person name="Zhu X."/>
            <person name="Su Y."/>
            <person name="Zhu Y."/>
        </authorList>
    </citation>
    <scope>NUCLEOTIDE SEQUENCE [MRNA]</scope>
    <source>
        <tissue>Venom gland</tissue>
    </source>
</reference>
<keyword id="KW-0027">Amidation</keyword>
<keyword id="KW-1015">Disulfide bond</keyword>
<keyword id="KW-0872">Ion channel impairing toxin</keyword>
<keyword id="KW-0528">Neurotoxin</keyword>
<keyword id="KW-0964">Secreted</keyword>
<keyword id="KW-0800">Toxin</keyword>
<keyword id="KW-0738">Voltage-gated sodium channel impairing toxin</keyword>
<name>SIX4_OLIMR</name>
<protein>
    <recommendedName>
        <fullName>Beta-insect depressant toxin BmKIT4</fullName>
        <shortName>BmK IT4</shortName>
        <shortName>Insect toxin 4</shortName>
    </recommendedName>
</protein>
<accession>Q17230</accession>
<feature type="chain" id="PRO_0000035203" description="Beta-insect depressant toxin BmKIT4">
    <location>
        <begin position="1"/>
        <end position="60"/>
    </location>
</feature>
<feature type="domain" description="LCN-type CS-alpha/beta" evidence="3">
    <location>
        <begin position="1"/>
        <end position="61"/>
    </location>
</feature>
<feature type="modified residue" description="Cysteine amide" evidence="2">
    <location>
        <position position="60"/>
    </location>
</feature>
<feature type="disulfide bond" evidence="3">
    <location>
        <begin position="10"/>
        <end position="60"/>
    </location>
</feature>
<feature type="disulfide bond" evidence="3">
    <location>
        <begin position="14"/>
        <end position="35"/>
    </location>
</feature>
<feature type="disulfide bond" evidence="3">
    <location>
        <begin position="21"/>
        <end position="42"/>
    </location>
</feature>
<feature type="disulfide bond" evidence="3">
    <location>
        <begin position="25"/>
        <end position="44"/>
    </location>
</feature>
<dbReference type="EMBL" id="X92846">
    <property type="protein sequence ID" value="CAA63431.1"/>
    <property type="status" value="ALT_INIT"/>
    <property type="molecule type" value="mRNA"/>
</dbReference>
<dbReference type="SMR" id="Q17230"/>
<dbReference type="GO" id="GO:0005576">
    <property type="term" value="C:extracellular region"/>
    <property type="evidence" value="ECO:0007669"/>
    <property type="project" value="UniProtKB-SubCell"/>
</dbReference>
<dbReference type="GO" id="GO:0019871">
    <property type="term" value="F:sodium channel inhibitor activity"/>
    <property type="evidence" value="ECO:0007669"/>
    <property type="project" value="InterPro"/>
</dbReference>
<dbReference type="GO" id="GO:0090729">
    <property type="term" value="F:toxin activity"/>
    <property type="evidence" value="ECO:0007669"/>
    <property type="project" value="UniProtKB-KW"/>
</dbReference>
<dbReference type="GO" id="GO:0006952">
    <property type="term" value="P:defense response"/>
    <property type="evidence" value="ECO:0007669"/>
    <property type="project" value="InterPro"/>
</dbReference>
<dbReference type="CDD" id="cd23106">
    <property type="entry name" value="neurotoxins_LC_scorpion"/>
    <property type="match status" value="1"/>
</dbReference>
<dbReference type="FunFam" id="3.30.30.10:FF:000002">
    <property type="entry name" value="Alpha-like toxin BmK-M1"/>
    <property type="match status" value="1"/>
</dbReference>
<dbReference type="Gene3D" id="3.30.30.10">
    <property type="entry name" value="Knottin, scorpion toxin-like"/>
    <property type="match status" value="1"/>
</dbReference>
<dbReference type="InterPro" id="IPR044062">
    <property type="entry name" value="LCN-type_CS_alpha_beta_dom"/>
</dbReference>
<dbReference type="InterPro" id="IPR003614">
    <property type="entry name" value="Scorpion_toxin-like"/>
</dbReference>
<dbReference type="InterPro" id="IPR036574">
    <property type="entry name" value="Scorpion_toxin-like_sf"/>
</dbReference>
<dbReference type="InterPro" id="IPR018218">
    <property type="entry name" value="Scorpion_toxinL"/>
</dbReference>
<dbReference type="InterPro" id="IPR002061">
    <property type="entry name" value="Scorpion_toxinL/defensin"/>
</dbReference>
<dbReference type="Pfam" id="PF00537">
    <property type="entry name" value="Toxin_3"/>
    <property type="match status" value="1"/>
</dbReference>
<dbReference type="PRINTS" id="PR00285">
    <property type="entry name" value="SCORPNTOXIN"/>
</dbReference>
<dbReference type="SMART" id="SM00505">
    <property type="entry name" value="Knot1"/>
    <property type="match status" value="1"/>
</dbReference>
<dbReference type="SUPFAM" id="SSF57095">
    <property type="entry name" value="Scorpion toxin-like"/>
    <property type="match status" value="1"/>
</dbReference>
<dbReference type="PROSITE" id="PS51863">
    <property type="entry name" value="LCN_CSAB"/>
    <property type="match status" value="1"/>
</dbReference>
<evidence type="ECO:0000250" key="1"/>
<evidence type="ECO:0000255" key="2"/>
<evidence type="ECO:0000255" key="3">
    <source>
        <dbReference type="PROSITE-ProRule" id="PRU01210"/>
    </source>
</evidence>
<evidence type="ECO:0000305" key="4"/>
<sequence>DGYIRGSNGCKISCLWGNEGCNKECKGFGAYYGYCWTWGLACWCEGLPDDKTWKSESNTCGRKK</sequence>
<comment type="function">
    <text evidence="1">Depressant insect beta-toxins cause a transient contraction paralysis followed by a slow flaccid paralysis. They bind voltage-independently at site-4 of sodium channels (Nav) and shift the voltage of activation toward more negative potentials thereby affecting sodium channel activation and promoting spontaneous and repetitive firing. This toxin is active only on insects (By similarity).</text>
</comment>
<comment type="subcellular location">
    <subcellularLocation>
        <location>Secreted</location>
    </subcellularLocation>
</comment>
<comment type="tissue specificity">
    <text>Expressed by the venom gland.</text>
</comment>
<comment type="domain">
    <text evidence="4">Has the structural arrangement of an alpha-helix connected to antiparallel beta-sheets by disulfide bonds (CS-alpha/beta).</text>
</comment>
<comment type="similarity">
    <text evidence="4">Belongs to the long (4 C-C) scorpion toxin superfamily. Sodium channel inhibitor family. Beta subfamily.</text>
</comment>
<comment type="sequence caution" evidence="4">
    <conflict type="erroneous initiation">
        <sequence resource="EMBL-CDS" id="CAA63431"/>
    </conflict>
</comment>
<organism>
    <name type="scientific">Olivierus martensii</name>
    <name type="common">Manchurian scorpion</name>
    <name type="synonym">Mesobuthus martensii</name>
    <dbReference type="NCBI Taxonomy" id="34649"/>
    <lineage>
        <taxon>Eukaryota</taxon>
        <taxon>Metazoa</taxon>
        <taxon>Ecdysozoa</taxon>
        <taxon>Arthropoda</taxon>
        <taxon>Chelicerata</taxon>
        <taxon>Arachnida</taxon>
        <taxon>Scorpiones</taxon>
        <taxon>Buthida</taxon>
        <taxon>Buthoidea</taxon>
        <taxon>Buthidae</taxon>
        <taxon>Olivierus</taxon>
    </lineage>
</organism>
<proteinExistence type="evidence at transcript level"/>